<evidence type="ECO:0000255" key="1">
    <source>
        <dbReference type="HAMAP-Rule" id="MF_00014"/>
    </source>
</evidence>
<protein>
    <recommendedName>
        <fullName evidence="1">Ribosome maturation factor RimM</fullName>
    </recommendedName>
</protein>
<reference key="1">
    <citation type="journal article" date="2007" name="Proc. Natl. Acad. Sci. U.S.A.">
        <title>Genome sequencing reveals complex secondary metabolome in the marine actinomycete Salinispora tropica.</title>
        <authorList>
            <person name="Udwary D.W."/>
            <person name="Zeigler L."/>
            <person name="Asolkar R.N."/>
            <person name="Singan V."/>
            <person name="Lapidus A."/>
            <person name="Fenical W."/>
            <person name="Jensen P.R."/>
            <person name="Moore B.S."/>
        </authorList>
    </citation>
    <scope>NUCLEOTIDE SEQUENCE [LARGE SCALE GENOMIC DNA]</scope>
    <source>
        <strain>ATCC BAA-916 / DSM 44818 / JCM 13857 / NBRC 105044 / CNB-440</strain>
    </source>
</reference>
<feature type="chain" id="PRO_0000351795" description="Ribosome maturation factor RimM">
    <location>
        <begin position="1"/>
        <end position="180"/>
    </location>
</feature>
<feature type="domain" description="PRC barrel" evidence="1">
    <location>
        <begin position="104"/>
        <end position="177"/>
    </location>
</feature>
<dbReference type="EMBL" id="CP000667">
    <property type="protein sequence ID" value="ABP53777.1"/>
    <property type="molecule type" value="Genomic_DNA"/>
</dbReference>
<dbReference type="RefSeq" id="WP_011905209.1">
    <property type="nucleotide sequence ID" value="NC_009380.1"/>
</dbReference>
<dbReference type="SMR" id="A4X4H7"/>
<dbReference type="STRING" id="369723.Strop_1307"/>
<dbReference type="KEGG" id="stp:Strop_1307"/>
<dbReference type="PATRIC" id="fig|369723.5.peg.1331"/>
<dbReference type="eggNOG" id="COG0806">
    <property type="taxonomic scope" value="Bacteria"/>
</dbReference>
<dbReference type="HOGENOM" id="CLU_077636_0_0_11"/>
<dbReference type="Proteomes" id="UP000000235">
    <property type="component" value="Chromosome"/>
</dbReference>
<dbReference type="GO" id="GO:0005737">
    <property type="term" value="C:cytoplasm"/>
    <property type="evidence" value="ECO:0007669"/>
    <property type="project" value="UniProtKB-SubCell"/>
</dbReference>
<dbReference type="GO" id="GO:0005840">
    <property type="term" value="C:ribosome"/>
    <property type="evidence" value="ECO:0007669"/>
    <property type="project" value="InterPro"/>
</dbReference>
<dbReference type="GO" id="GO:0043022">
    <property type="term" value="F:ribosome binding"/>
    <property type="evidence" value="ECO:0007669"/>
    <property type="project" value="InterPro"/>
</dbReference>
<dbReference type="GO" id="GO:0042274">
    <property type="term" value="P:ribosomal small subunit biogenesis"/>
    <property type="evidence" value="ECO:0007669"/>
    <property type="project" value="UniProtKB-UniRule"/>
</dbReference>
<dbReference type="GO" id="GO:0006364">
    <property type="term" value="P:rRNA processing"/>
    <property type="evidence" value="ECO:0007669"/>
    <property type="project" value="UniProtKB-UniRule"/>
</dbReference>
<dbReference type="Gene3D" id="2.30.30.240">
    <property type="entry name" value="PRC-barrel domain"/>
    <property type="match status" value="1"/>
</dbReference>
<dbReference type="Gene3D" id="2.40.30.60">
    <property type="entry name" value="RimM"/>
    <property type="match status" value="1"/>
</dbReference>
<dbReference type="HAMAP" id="MF_00014">
    <property type="entry name" value="Ribosome_mat_RimM"/>
    <property type="match status" value="1"/>
</dbReference>
<dbReference type="InterPro" id="IPR011033">
    <property type="entry name" value="PRC_barrel-like_sf"/>
</dbReference>
<dbReference type="InterPro" id="IPR056792">
    <property type="entry name" value="PRC_RimM"/>
</dbReference>
<dbReference type="InterPro" id="IPR011961">
    <property type="entry name" value="RimM"/>
</dbReference>
<dbReference type="InterPro" id="IPR002676">
    <property type="entry name" value="RimM_N"/>
</dbReference>
<dbReference type="InterPro" id="IPR036976">
    <property type="entry name" value="RimM_N_sf"/>
</dbReference>
<dbReference type="InterPro" id="IPR009000">
    <property type="entry name" value="Transl_B-barrel_sf"/>
</dbReference>
<dbReference type="NCBIfam" id="TIGR02273">
    <property type="entry name" value="16S_RimM"/>
    <property type="match status" value="1"/>
</dbReference>
<dbReference type="PANTHER" id="PTHR33692">
    <property type="entry name" value="RIBOSOME MATURATION FACTOR RIMM"/>
    <property type="match status" value="1"/>
</dbReference>
<dbReference type="PANTHER" id="PTHR33692:SF1">
    <property type="entry name" value="RIBOSOME MATURATION FACTOR RIMM"/>
    <property type="match status" value="1"/>
</dbReference>
<dbReference type="Pfam" id="PF24986">
    <property type="entry name" value="PRC_RimM"/>
    <property type="match status" value="1"/>
</dbReference>
<dbReference type="Pfam" id="PF01782">
    <property type="entry name" value="RimM"/>
    <property type="match status" value="1"/>
</dbReference>
<dbReference type="SUPFAM" id="SSF50346">
    <property type="entry name" value="PRC-barrel domain"/>
    <property type="match status" value="1"/>
</dbReference>
<dbReference type="SUPFAM" id="SSF50447">
    <property type="entry name" value="Translation proteins"/>
    <property type="match status" value="1"/>
</dbReference>
<proteinExistence type="inferred from homology"/>
<accession>A4X4H7</accession>
<keyword id="KW-0143">Chaperone</keyword>
<keyword id="KW-0963">Cytoplasm</keyword>
<keyword id="KW-1185">Reference proteome</keyword>
<keyword id="KW-0690">Ribosome biogenesis</keyword>
<keyword id="KW-0698">rRNA processing</keyword>
<comment type="function">
    <text evidence="1">An accessory protein needed during the final step in the assembly of 30S ribosomal subunit, possibly for assembly of the head region. Essential for efficient processing of 16S rRNA. May be needed both before and after RbfA during the maturation of 16S rRNA. It has affinity for free ribosomal 30S subunits but not for 70S ribosomes.</text>
</comment>
<comment type="subunit">
    <text evidence="1">Binds ribosomal protein uS19.</text>
</comment>
<comment type="subcellular location">
    <subcellularLocation>
        <location evidence="1">Cytoplasm</location>
    </subcellularLocation>
</comment>
<comment type="domain">
    <text evidence="1">The PRC barrel domain binds ribosomal protein uS19.</text>
</comment>
<comment type="similarity">
    <text evidence="1">Belongs to the RimM family.</text>
</comment>
<sequence>MLVVGRIGKPHGIRGEVTVEVRTDEPETRFAPGSVLRTEPGANVPAHPGAYRVPGELTVEAARWHQGRVLLVTFEGVLDRNVAEALRGTLVGVDRADVAPPTDPEEFHDHQLVGLAVVTSAGERLGEIARIDHAPAADLLVLRRPGRRDVLIPFVQAIVPEIDLAGGRVVVDPPGGLLDL</sequence>
<gene>
    <name evidence="1" type="primary">rimM</name>
    <name type="ordered locus">Strop_1307</name>
</gene>
<name>RIMM_SALTO</name>
<organism>
    <name type="scientific">Salinispora tropica (strain ATCC BAA-916 / DSM 44818 / JCM 13857 / NBRC 105044 / CNB-440)</name>
    <dbReference type="NCBI Taxonomy" id="369723"/>
    <lineage>
        <taxon>Bacteria</taxon>
        <taxon>Bacillati</taxon>
        <taxon>Actinomycetota</taxon>
        <taxon>Actinomycetes</taxon>
        <taxon>Micromonosporales</taxon>
        <taxon>Micromonosporaceae</taxon>
        <taxon>Salinispora</taxon>
    </lineage>
</organism>